<gene>
    <name evidence="1" type="primary">yhaM</name>
    <name type="ordered locus">EcolC_0588</name>
</gene>
<proteinExistence type="inferred from homology"/>
<name>YHAM_ECOLC</name>
<reference key="1">
    <citation type="submission" date="2008-02" db="EMBL/GenBank/DDBJ databases">
        <title>Complete sequence of Escherichia coli C str. ATCC 8739.</title>
        <authorList>
            <person name="Copeland A."/>
            <person name="Lucas S."/>
            <person name="Lapidus A."/>
            <person name="Glavina del Rio T."/>
            <person name="Dalin E."/>
            <person name="Tice H."/>
            <person name="Bruce D."/>
            <person name="Goodwin L."/>
            <person name="Pitluck S."/>
            <person name="Kiss H."/>
            <person name="Brettin T."/>
            <person name="Detter J.C."/>
            <person name="Han C."/>
            <person name="Kuske C.R."/>
            <person name="Schmutz J."/>
            <person name="Larimer F."/>
            <person name="Land M."/>
            <person name="Hauser L."/>
            <person name="Kyrpides N."/>
            <person name="Mikhailova N."/>
            <person name="Ingram L."/>
            <person name="Richardson P."/>
        </authorList>
    </citation>
    <scope>NUCLEOTIDE SEQUENCE [LARGE SCALE GENOMIC DNA]</scope>
    <source>
        <strain>ATCC 8739 / DSM 1576 / NBRC 3972 / NCIMB 8545 / WDCM 00012 / Crooks</strain>
    </source>
</reference>
<accession>B1IRK5</accession>
<organism>
    <name type="scientific">Escherichia coli (strain ATCC 8739 / DSM 1576 / NBRC 3972 / NCIMB 8545 / WDCM 00012 / Crooks)</name>
    <dbReference type="NCBI Taxonomy" id="481805"/>
    <lineage>
        <taxon>Bacteria</taxon>
        <taxon>Pseudomonadati</taxon>
        <taxon>Pseudomonadota</taxon>
        <taxon>Gammaproteobacteria</taxon>
        <taxon>Enterobacterales</taxon>
        <taxon>Enterobacteriaceae</taxon>
        <taxon>Escherichia</taxon>
    </lineage>
</organism>
<comment type="similarity">
    <text evidence="1">Belongs to the UPF0597 family.</text>
</comment>
<feature type="chain" id="PRO_0000339817" description="UPF0597 protein YhaM">
    <location>
        <begin position="1"/>
        <end position="436"/>
    </location>
</feature>
<evidence type="ECO:0000255" key="1">
    <source>
        <dbReference type="HAMAP-Rule" id="MF_01845"/>
    </source>
</evidence>
<sequence>MFDSTLNPLWQRYILAVQEEVKPALGCTEPISLALAAAVAAAELEGPVERVEAWVSPNLMKNGLGVTVPGTGMVGLPIAAALGALGGNANAGLEVLKDATAQAIADAKALLAAGKVSVKIQEPCNEILFSRAKVWNGEKWACVTIVGGHTNIVHIETHDGVVFTQQACVAEGEQESPLTVLSRTTLAEILKFVNEVPFAAIRFILDSAKLNCALSQEGLSGKWGLHIGATLEKQCARGLLAKDLSSSIVIRTSAASDARMGGATLPAMSNSGSGNQGITATMPVVVVAEHFGADDERLARALMLSHLSAIYIHNQLPRLSALCAATTAAMGAAAGMAWLVDGRYETISMAISSMIGDVSGMICDGASNSCAMKVSTSASAAWKAVLMALDDTAVTGNEGIVAHDVEQSIANLCALASHSMQQTDRQIIEIMASKAR</sequence>
<dbReference type="EMBL" id="CP000946">
    <property type="protein sequence ID" value="ACA76264.1"/>
    <property type="molecule type" value="Genomic_DNA"/>
</dbReference>
<dbReference type="SMR" id="B1IRK5"/>
<dbReference type="KEGG" id="ecl:EcolC_0588"/>
<dbReference type="HOGENOM" id="CLU_051840_0_0_6"/>
<dbReference type="GO" id="GO:0080146">
    <property type="term" value="F:L-cysteine desulfhydrase activity"/>
    <property type="evidence" value="ECO:0007669"/>
    <property type="project" value="TreeGrafter"/>
</dbReference>
<dbReference type="GO" id="GO:0019450">
    <property type="term" value="P:L-cysteine catabolic process to pyruvate"/>
    <property type="evidence" value="ECO:0007669"/>
    <property type="project" value="TreeGrafter"/>
</dbReference>
<dbReference type="HAMAP" id="MF_01845">
    <property type="entry name" value="UPF0597"/>
    <property type="match status" value="1"/>
</dbReference>
<dbReference type="InterPro" id="IPR005130">
    <property type="entry name" value="Ser_deHydtase-like_asu"/>
</dbReference>
<dbReference type="InterPro" id="IPR021144">
    <property type="entry name" value="UPF0597"/>
</dbReference>
<dbReference type="PANTHER" id="PTHR30501">
    <property type="entry name" value="UPF0597 PROTEIN YHAM"/>
    <property type="match status" value="1"/>
</dbReference>
<dbReference type="PANTHER" id="PTHR30501:SF2">
    <property type="entry name" value="UPF0597 PROTEIN YHAM"/>
    <property type="match status" value="1"/>
</dbReference>
<dbReference type="Pfam" id="PF03313">
    <property type="entry name" value="SDH_alpha"/>
    <property type="match status" value="1"/>
</dbReference>
<dbReference type="PIRSF" id="PIRSF006054">
    <property type="entry name" value="UCP006054"/>
    <property type="match status" value="1"/>
</dbReference>
<protein>
    <recommendedName>
        <fullName evidence="1">UPF0597 protein YhaM</fullName>
    </recommendedName>
</protein>